<comment type="function">
    <text evidence="3">Essential counter-regulatory carboxypeptidase of the renin-angiotensin hormone system that is a critical regulator of blood volume, systemic vascular resistance, and thus cardiovascular homeostasis. Converts angiotensin I to angiotensin 1-9, a nine-amino acid peptide with anti-hypertrophic effects in cardiomyocytes, and angiotensin II to angiotensin 1-7, which then acts as a beneficial vasodilator and anti-proliferation agent, counterbalancing the actions of the vasoconstrictor angiotensin II. Also removes the C-terminal residue from three other vasoactive peptides, neurotensin, kinetensin, and des-Arg bradykinin, but is not active on bradykinin. Also cleaves other biological peptides, such as apelins, casomorphins and dynorphin A. Plays an important role in amino acid transport by acting as binding partner of amino acid transporter SLC6A19 in intestine, regulating trafficking, expression on the cell surface, and its catalytic activity.</text>
</comment>
<comment type="catalytic activity">
    <reaction evidence="3">
        <text>angiotensin II + H2O = angiotensin-(1-7) + L-phenylalanine</text>
        <dbReference type="Rhea" id="RHEA:26554"/>
        <dbReference type="ChEBI" id="CHEBI:15377"/>
        <dbReference type="ChEBI" id="CHEBI:58095"/>
        <dbReference type="ChEBI" id="CHEBI:58506"/>
        <dbReference type="ChEBI" id="CHEBI:58922"/>
        <dbReference type="EC" id="3.4.17.23"/>
    </reaction>
    <physiologicalReaction direction="left-to-right" evidence="3">
        <dbReference type="Rhea" id="RHEA:26555"/>
    </physiologicalReaction>
</comment>
<comment type="catalytic activity">
    <reaction evidence="3">
        <text>angiotensin I + H2O = angiotensin-(1-9) + L-leucine</text>
        <dbReference type="Rhea" id="RHEA:63532"/>
        <dbReference type="ChEBI" id="CHEBI:15377"/>
        <dbReference type="ChEBI" id="CHEBI:57427"/>
        <dbReference type="ChEBI" id="CHEBI:147350"/>
        <dbReference type="ChEBI" id="CHEBI:147351"/>
    </reaction>
    <physiologicalReaction direction="left-to-right" evidence="3">
        <dbReference type="Rhea" id="RHEA:63533"/>
    </physiologicalReaction>
</comment>
<comment type="catalytic activity">
    <reaction evidence="3">
        <text>bradykinin(1-8) + H2O = bradykinin(1-7) + L-phenylalanine</text>
        <dbReference type="Rhea" id="RHEA:63536"/>
        <dbReference type="ChEBI" id="CHEBI:15377"/>
        <dbReference type="ChEBI" id="CHEBI:58095"/>
        <dbReference type="ChEBI" id="CHEBI:133069"/>
        <dbReference type="ChEBI" id="CHEBI:147352"/>
    </reaction>
    <physiologicalReaction direction="left-to-right" evidence="3">
        <dbReference type="Rhea" id="RHEA:63537"/>
    </physiologicalReaction>
</comment>
<comment type="catalytic activity">
    <reaction evidence="3">
        <text>neurotensin + H2O = neurotensin-(1-12) + L-leucine</text>
        <dbReference type="Rhea" id="RHEA:63540"/>
        <dbReference type="ChEBI" id="CHEBI:15377"/>
        <dbReference type="ChEBI" id="CHEBI:57427"/>
        <dbReference type="ChEBI" id="CHEBI:147362"/>
        <dbReference type="ChEBI" id="CHEBI:147363"/>
    </reaction>
    <physiologicalReaction direction="left-to-right" evidence="3">
        <dbReference type="Rhea" id="RHEA:63541"/>
    </physiologicalReaction>
</comment>
<comment type="catalytic activity">
    <reaction evidence="3">
        <text>kinetensin + H2O = kinetensin-(1-8) + L-leucine</text>
        <dbReference type="Rhea" id="RHEA:63544"/>
        <dbReference type="ChEBI" id="CHEBI:15377"/>
        <dbReference type="ChEBI" id="CHEBI:57427"/>
        <dbReference type="ChEBI" id="CHEBI:147364"/>
        <dbReference type="ChEBI" id="CHEBI:147365"/>
    </reaction>
    <physiologicalReaction direction="left-to-right" evidence="3">
        <dbReference type="Rhea" id="RHEA:63545"/>
    </physiologicalReaction>
</comment>
<comment type="catalytic activity">
    <reaction evidence="3">
        <text>dynorphin A-(1-13) + H2O = dynorphin A-(1-12) + L-lysine</text>
        <dbReference type="Rhea" id="RHEA:63556"/>
        <dbReference type="ChEBI" id="CHEBI:15377"/>
        <dbReference type="ChEBI" id="CHEBI:32551"/>
        <dbReference type="ChEBI" id="CHEBI:147381"/>
        <dbReference type="ChEBI" id="CHEBI:147383"/>
    </reaction>
    <physiologicalReaction direction="left-to-right" evidence="3">
        <dbReference type="Rhea" id="RHEA:63557"/>
    </physiologicalReaction>
</comment>
<comment type="catalytic activity">
    <reaction evidence="3">
        <text>apelin-13 + H2O = apelin-12 + L-phenylalanine</text>
        <dbReference type="Rhea" id="RHEA:63564"/>
        <dbReference type="ChEBI" id="CHEBI:15377"/>
        <dbReference type="ChEBI" id="CHEBI:58095"/>
        <dbReference type="ChEBI" id="CHEBI:147395"/>
        <dbReference type="ChEBI" id="CHEBI:147396"/>
    </reaction>
    <physiologicalReaction direction="left-to-right" evidence="3">
        <dbReference type="Rhea" id="RHEA:63565"/>
    </physiologicalReaction>
</comment>
<comment type="catalytic activity">
    <reaction evidence="3">
        <text>[Pyr1]apelin-13 + H2O = [Pyr1]apelin-12 + L-phenylalanine</text>
        <dbReference type="Rhea" id="RHEA:63604"/>
        <dbReference type="ChEBI" id="CHEBI:15377"/>
        <dbReference type="ChEBI" id="CHEBI:58095"/>
        <dbReference type="ChEBI" id="CHEBI:147415"/>
        <dbReference type="ChEBI" id="CHEBI:147416"/>
    </reaction>
    <physiologicalReaction direction="left-to-right" evidence="3">
        <dbReference type="Rhea" id="RHEA:63605"/>
    </physiologicalReaction>
</comment>
<comment type="catalytic activity">
    <reaction evidence="3">
        <text>apelin-17 + H2O = apelin-16 + L-phenylalanine</text>
        <dbReference type="Rhea" id="RHEA:63608"/>
        <dbReference type="ChEBI" id="CHEBI:15377"/>
        <dbReference type="ChEBI" id="CHEBI:58095"/>
        <dbReference type="ChEBI" id="CHEBI:147421"/>
        <dbReference type="ChEBI" id="CHEBI:147422"/>
    </reaction>
    <physiologicalReaction direction="left-to-right" evidence="3">
        <dbReference type="Rhea" id="RHEA:63609"/>
    </physiologicalReaction>
</comment>
<comment type="cofactor">
    <cofactor evidence="1">
        <name>Zn(2+)</name>
        <dbReference type="ChEBI" id="CHEBI:29105"/>
    </cofactor>
    <text evidence="1">Binds 1 zinc ion per subunit.</text>
</comment>
<comment type="cofactor">
    <cofactor evidence="1">
        <name>chloride</name>
        <dbReference type="ChEBI" id="CHEBI:17996"/>
    </cofactor>
    <text evidence="1">Binds 1 Cl(-) ion per subunit.</text>
</comment>
<comment type="activity regulation">
    <text evidence="9">Activated by chloride and fluoride, but not bromide. Inhibited by MLN-4760, cFP_Leu, and EDTA, but not by the ACE inhibitors linosipril, captopril, enalaprilat.</text>
</comment>
<comment type="subunit">
    <text evidence="2 3">Homodimer. Interacts with the catalytically active form of TMPRSS2 (By similarity). Interacts with SLC6A19; this interaction is essential for expression and function of SLC6A19 in intestine (By similarity). Interacts with ITGA5:ITGB1 (By similarity). Probably interacts (via endocytic sorting signal motif) with AP2M1; the interaction is inhibited by phosphorylation of Tyr-781 (By similarity). Interacts (via PDZ-binding motif) with NHERF1 (via PDZ domains); the interaction may enhance ACE2 membrane residence (By similarity).</text>
</comment>
<comment type="interaction">
    <interactant intactId="EBI-25503774">
        <id>Q5EGZ1</id>
    </interactant>
    <interactant intactId="EBI-26997256">
        <id>A0A6G6A1M4</id>
        <label>S</label>
    </interactant>
    <organismsDiffer>true</organismsDiffer>
    <experiments>2</experiments>
</comment>
<comment type="interaction">
    <interactant intactId="EBI-25503774">
        <id>Q5EGZ1</id>
    </interactant>
    <interactant intactId="EBI-26997195">
        <id>A0A6M3G9R1</id>
        <label>S</label>
    </interactant>
    <organismsDiffer>true</organismsDiffer>
    <experiments>2</experiments>
</comment>
<comment type="interaction">
    <interactant intactId="EBI-25503774">
        <id>Q5EGZ1</id>
    </interactant>
    <interactant intactId="EBI-25474821">
        <id>P0DTC2</id>
        <label>S</label>
    </interactant>
    <organismsDiffer>true</organismsDiffer>
    <experiments>2</experiments>
</comment>
<comment type="interaction">
    <interactant intactId="EBI-25503774">
        <id>Q5EGZ1</id>
    </interactant>
    <interactant intactId="EBI-15582614">
        <id>P59594</id>
        <label>S</label>
    </interactant>
    <organismsDiffer>true</organismsDiffer>
    <experiments>2</experiments>
</comment>
<comment type="subcellular location">
    <molecule>Processed angiotensin-converting enzyme 2</molecule>
    <subcellularLocation>
        <location evidence="1">Secreted</location>
    </subcellularLocation>
</comment>
<comment type="subcellular location">
    <subcellularLocation>
        <location evidence="3">Cell membrane</location>
        <topology evidence="4">Single-pass type I membrane protein</topology>
    </subcellularLocation>
    <subcellularLocation>
        <location evidence="2">Cytoplasm</location>
    </subcellularLocation>
    <subcellularLocation>
        <location evidence="3">Cell projection</location>
        <location evidence="3">Cilium</location>
    </subcellularLocation>
    <subcellularLocation>
        <location evidence="3">Apical cell membrane</location>
    </subcellularLocation>
    <text evidence="2">Detected in both cell membrane and cytoplasm in neurons.</text>
</comment>
<comment type="tissue specificity">
    <text evidence="9 10 11">Expressed in heart, kidney and forebrain. In testis, expression is restricted to Leydig cells. In heart, expressed in endothelial cells from small and large arteries, arterial smooth muscle cells, and myocytes (at protein level). Ubiquitously expressed, with highest levels in ileum, bladder and lung.</text>
</comment>
<comment type="induction">
    <text evidence="8 10">Down-regulated in hypertensive animals. Up-regulated after myocardial infarction.</text>
</comment>
<comment type="domain">
    <text evidence="3">The cytoplasmic tail contains several linear motifs such as LIR, PDZ-binding, PTB and endocytic sorting signal motifs that would allow interaction with proteins that mediate endocytic trafficking and autophagy.</text>
</comment>
<comment type="PTM">
    <text evidence="9">Glycosylated.</text>
</comment>
<comment type="PTM">
    <text evidence="1">Proteolytic cleavage by ADAM17 generates a secreted form. Also cleaved by serine proteases: TMPRSS2, TMPRSS11D and HPN/TMPRSS1 (By similarity).</text>
</comment>
<comment type="PTM">
    <text evidence="3">Phosphorylated. Phosphorylation at Tyr-781 probably inhibits interaction with AP2M1 and enables interactions with proteins containing SH2 domains.</text>
</comment>
<comment type="PTM">
    <text evidence="3">Ubiquitinated. Ubiquitinated on Lys-788 via 'Lys-48'-linked ubiquitin. 'Lys-48'-linked deubiquitinated by USP50 on the Lys-788; leading to its stabilization.</text>
</comment>
<comment type="miscellaneous">
    <text>In contrast to its human and palm-civet orthologs, does not interact with SARS-CoV spike glycoprotein.</text>
</comment>
<comment type="similarity">
    <text evidence="12">Belongs to the peptidase M2 family.</text>
</comment>
<protein>
    <recommendedName>
        <fullName>Angiotensin-converting enzyme 2</fullName>
        <ecNumber evidence="3">3.4.17.23</ecNumber>
    </recommendedName>
    <alternativeName>
        <fullName>ACE-related carboxypeptidase</fullName>
        <ecNumber evidence="3">3.4.17.-</ecNumber>
    </alternativeName>
    <component>
        <recommendedName>
            <fullName>Processed angiotensin-converting enzyme 2</fullName>
        </recommendedName>
    </component>
</protein>
<keyword id="KW-0002">3D-structure</keyword>
<keyword id="KW-0121">Carboxypeptidase</keyword>
<keyword id="KW-1003">Cell membrane</keyword>
<keyword id="KW-0966">Cell projection</keyword>
<keyword id="KW-0868">Chloride</keyword>
<keyword id="KW-0963">Cytoplasm</keyword>
<keyword id="KW-1015">Disulfide bond</keyword>
<keyword id="KW-0325">Glycoprotein</keyword>
<keyword id="KW-0378">Hydrolase</keyword>
<keyword id="KW-1017">Isopeptide bond</keyword>
<keyword id="KW-0472">Membrane</keyword>
<keyword id="KW-0479">Metal-binding</keyword>
<keyword id="KW-0482">Metalloprotease</keyword>
<keyword id="KW-0597">Phosphoprotein</keyword>
<keyword id="KW-0645">Protease</keyword>
<keyword id="KW-1185">Reference proteome</keyword>
<keyword id="KW-0964">Secreted</keyword>
<keyword id="KW-0732">Signal</keyword>
<keyword id="KW-0812">Transmembrane</keyword>
<keyword id="KW-1133">Transmembrane helix</keyword>
<keyword id="KW-0832">Ubl conjugation</keyword>
<keyword id="KW-0862">Zinc</keyword>
<feature type="signal peptide" evidence="4">
    <location>
        <begin position="1"/>
        <end position="17"/>
    </location>
</feature>
<feature type="chain" id="PRO_0000028574" description="Angiotensin-converting enzyme 2">
    <location>
        <begin position="18"/>
        <end position="805"/>
    </location>
</feature>
<feature type="chain" id="PRO_0000292272" description="Processed angiotensin-converting enzyme 2">
    <location>
        <begin position="18"/>
        <end position="708"/>
    </location>
</feature>
<feature type="topological domain" description="Extracellular" evidence="4">
    <location>
        <begin position="18"/>
        <end position="740"/>
    </location>
</feature>
<feature type="transmembrane region" description="Helical" evidence="5">
    <location>
        <begin position="741"/>
        <end position="761"/>
    </location>
</feature>
<feature type="topological domain" description="Cytoplasmic" evidence="4">
    <location>
        <begin position="762"/>
        <end position="805"/>
    </location>
</feature>
<feature type="domain" description="Peptidase M2" evidence="6">
    <location>
        <begin position="19"/>
        <end position="607"/>
    </location>
</feature>
<feature type="domain" description="Collectrin-like" evidence="5">
    <location>
        <begin position="614"/>
        <end position="805"/>
    </location>
</feature>
<feature type="region of interest" description="Essential for cleavage by ADAM17" evidence="1">
    <location>
        <begin position="652"/>
        <end position="659"/>
    </location>
</feature>
<feature type="region of interest" description="Essential for cleavage by TMPRSS11D and TMPRSS2" evidence="1">
    <location>
        <begin position="697"/>
        <end position="716"/>
    </location>
</feature>
<feature type="region of interest" description="Disordered" evidence="7">
    <location>
        <begin position="771"/>
        <end position="805"/>
    </location>
</feature>
<feature type="short sequence motif" description="LIR" evidence="3">
    <location>
        <begin position="778"/>
        <end position="786"/>
    </location>
</feature>
<feature type="short sequence motif" description="SH2-binding" evidence="3">
    <location>
        <begin position="781"/>
        <end position="785"/>
    </location>
</feature>
<feature type="short sequence motif" description="Endocytic sorting signal" evidence="3">
    <location>
        <begin position="781"/>
        <end position="784"/>
    </location>
</feature>
<feature type="short sequence motif" description="PTB" evidence="3">
    <location>
        <begin position="792"/>
        <end position="795"/>
    </location>
</feature>
<feature type="short sequence motif" description="PDZ-binding" evidence="3">
    <location>
        <begin position="803"/>
        <end position="805"/>
    </location>
</feature>
<feature type="compositionally biased region" description="Polar residues" evidence="7">
    <location>
        <begin position="793"/>
        <end position="805"/>
    </location>
</feature>
<feature type="active site" description="Proton acceptor" evidence="6">
    <location>
        <position position="375"/>
    </location>
</feature>
<feature type="active site" description="Proton donor" evidence="6">
    <location>
        <position position="505"/>
    </location>
</feature>
<feature type="binding site" evidence="6">
    <location>
        <position position="169"/>
    </location>
    <ligand>
        <name>chloride</name>
        <dbReference type="ChEBI" id="CHEBI:17996"/>
    </ligand>
</feature>
<feature type="binding site" evidence="3">
    <location>
        <position position="273"/>
    </location>
    <ligand>
        <name>substrate</name>
    </ligand>
</feature>
<feature type="binding site" evidence="3">
    <location>
        <begin position="345"/>
        <end position="346"/>
    </location>
    <ligand>
        <name>substrate</name>
    </ligand>
</feature>
<feature type="binding site" evidence="6">
    <location>
        <position position="374"/>
    </location>
    <ligand>
        <name>Zn(2+)</name>
        <dbReference type="ChEBI" id="CHEBI:29105"/>
        <note>catalytic</note>
    </ligand>
</feature>
<feature type="binding site" evidence="6">
    <location>
        <position position="378"/>
    </location>
    <ligand>
        <name>Zn(2+)</name>
        <dbReference type="ChEBI" id="CHEBI:29105"/>
        <note>catalytic</note>
    </ligand>
</feature>
<feature type="binding site" evidence="6">
    <location>
        <position position="402"/>
    </location>
    <ligand>
        <name>Zn(2+)</name>
        <dbReference type="ChEBI" id="CHEBI:29105"/>
        <note>catalytic</note>
    </ligand>
</feature>
<feature type="binding site" evidence="6">
    <location>
        <position position="477"/>
    </location>
    <ligand>
        <name>chloride</name>
        <dbReference type="ChEBI" id="CHEBI:17996"/>
    </ligand>
</feature>
<feature type="binding site" evidence="6">
    <location>
        <position position="481"/>
    </location>
    <ligand>
        <name>chloride</name>
        <dbReference type="ChEBI" id="CHEBI:17996"/>
    </ligand>
</feature>
<feature type="binding site" evidence="3">
    <location>
        <position position="515"/>
    </location>
    <ligand>
        <name>substrate</name>
    </ligand>
</feature>
<feature type="modified residue" description="Phosphotyrosine" evidence="3">
    <location>
        <position position="781"/>
    </location>
</feature>
<feature type="modified residue" description="Phosphoserine" evidence="3">
    <location>
        <position position="783"/>
    </location>
</feature>
<feature type="glycosylation site" description="N-linked (GlcNAc...) asparagine" evidence="4">
    <location>
        <position position="53"/>
    </location>
</feature>
<feature type="glycosylation site" description="N-linked (GlcNAc...) asparagine" evidence="4">
    <location>
        <position position="82"/>
    </location>
</feature>
<feature type="glycosylation site" description="N-linked (GlcNAc...) asparagine" evidence="4">
    <location>
        <position position="90"/>
    </location>
</feature>
<feature type="glycosylation site" description="N-linked (GlcNAc...) asparagine" evidence="4">
    <location>
        <position position="299"/>
    </location>
</feature>
<feature type="glycosylation site" description="N-linked (GlcNAc...) asparagine" evidence="4">
    <location>
        <position position="432"/>
    </location>
</feature>
<feature type="glycosylation site" description="N-linked (GlcNAc...) asparagine" evidence="4">
    <location>
        <position position="546"/>
    </location>
</feature>
<feature type="glycosylation site" description="N-linked (GlcNAc...) asparagine" evidence="4">
    <location>
        <position position="601"/>
    </location>
</feature>
<feature type="glycosylation site" description="N-linked (GlcNAc...) asparagine" evidence="4">
    <location>
        <position position="660"/>
    </location>
</feature>
<feature type="glycosylation site" description="N-linked (GlcNAc...) asparagine" evidence="4">
    <location>
        <position position="690"/>
    </location>
</feature>
<feature type="disulfide bond" evidence="6">
    <location>
        <begin position="133"/>
        <end position="141"/>
    </location>
</feature>
<feature type="disulfide bond" evidence="6">
    <location>
        <begin position="344"/>
        <end position="361"/>
    </location>
</feature>
<feature type="disulfide bond" evidence="6">
    <location>
        <begin position="530"/>
        <end position="542"/>
    </location>
</feature>
<feature type="cross-link" description="Glycyl lysine isopeptide (Lys-Gly) (interchain with G-Cter in ubiquitin)" evidence="3">
    <location>
        <position position="788"/>
    </location>
</feature>
<feature type="helix" evidence="13">
    <location>
        <begin position="20"/>
        <end position="52"/>
    </location>
</feature>
<feature type="helix" evidence="13">
    <location>
        <begin position="56"/>
        <end position="79"/>
    </location>
</feature>
<feature type="helix" evidence="13">
    <location>
        <begin position="80"/>
        <end position="82"/>
    </location>
</feature>
<feature type="turn" evidence="13">
    <location>
        <begin position="85"/>
        <end position="87"/>
    </location>
</feature>
<feature type="helix" evidence="13">
    <location>
        <begin position="93"/>
        <end position="101"/>
    </location>
</feature>
<feature type="helix" evidence="13">
    <location>
        <begin position="104"/>
        <end position="106"/>
    </location>
</feature>
<feature type="helix" evidence="13">
    <location>
        <begin position="110"/>
        <end position="128"/>
    </location>
</feature>
<feature type="turn" evidence="13">
    <location>
        <begin position="144"/>
        <end position="146"/>
    </location>
</feature>
<feature type="helix" evidence="13">
    <location>
        <begin position="148"/>
        <end position="153"/>
    </location>
</feature>
<feature type="helix" evidence="13">
    <location>
        <begin position="158"/>
        <end position="192"/>
    </location>
</feature>
<feature type="turn" evidence="13">
    <location>
        <begin position="193"/>
        <end position="195"/>
    </location>
</feature>
<feature type="helix" evidence="13">
    <location>
        <begin position="199"/>
        <end position="204"/>
    </location>
</feature>
<feature type="helix" evidence="13">
    <location>
        <begin position="221"/>
        <end position="230"/>
    </location>
</feature>
<feature type="turn" evidence="13">
    <location>
        <begin position="231"/>
        <end position="233"/>
    </location>
</feature>
<feature type="helix" evidence="13">
    <location>
        <begin position="234"/>
        <end position="251"/>
    </location>
</feature>
<feature type="turn" evidence="13">
    <location>
        <begin position="253"/>
        <end position="255"/>
    </location>
</feature>
<feature type="helix" evidence="13">
    <location>
        <begin position="264"/>
        <end position="266"/>
    </location>
</feature>
<feature type="strand" evidence="13">
    <location>
        <begin position="267"/>
        <end position="272"/>
    </location>
</feature>
<feature type="helix" evidence="13">
    <location>
        <begin position="276"/>
        <end position="278"/>
    </location>
</feature>
<feature type="helix" evidence="13">
    <location>
        <begin position="279"/>
        <end position="282"/>
    </location>
</feature>
<feature type="helix" evidence="13">
    <location>
        <begin position="294"/>
        <end position="300"/>
    </location>
</feature>
<feature type="helix" evidence="13">
    <location>
        <begin position="304"/>
        <end position="317"/>
    </location>
</feature>
<feature type="helix" evidence="13">
    <location>
        <begin position="327"/>
        <end position="330"/>
    </location>
</feature>
<feature type="strand" evidence="13">
    <location>
        <begin position="347"/>
        <end position="350"/>
    </location>
</feature>
<feature type="strand" evidence="13">
    <location>
        <begin position="352"/>
        <end position="354"/>
    </location>
</feature>
<feature type="strand" evidence="13">
    <location>
        <begin position="356"/>
        <end position="359"/>
    </location>
</feature>
<feature type="helix" evidence="13">
    <location>
        <begin position="366"/>
        <end position="384"/>
    </location>
</feature>
<feature type="helix" evidence="13">
    <location>
        <begin position="385"/>
        <end position="387"/>
    </location>
</feature>
<feature type="helix" evidence="13">
    <location>
        <begin position="390"/>
        <end position="392"/>
    </location>
</feature>
<feature type="helix" evidence="13">
    <location>
        <begin position="400"/>
        <end position="412"/>
    </location>
</feature>
<feature type="helix" evidence="13">
    <location>
        <begin position="415"/>
        <end position="421"/>
    </location>
</feature>
<feature type="strand" evidence="13">
    <location>
        <begin position="422"/>
        <end position="424"/>
    </location>
</feature>
<feature type="helix" evidence="13">
    <location>
        <begin position="432"/>
        <end position="446"/>
    </location>
</feature>
<feature type="turn" evidence="13">
    <location>
        <begin position="447"/>
        <end position="449"/>
    </location>
</feature>
<feature type="helix" evidence="13">
    <location>
        <begin position="450"/>
        <end position="464"/>
    </location>
</feature>
<feature type="helix" evidence="13">
    <location>
        <begin position="473"/>
        <end position="483"/>
    </location>
</feature>
<feature type="helix" evidence="13">
    <location>
        <begin position="500"/>
        <end position="502"/>
    </location>
</feature>
<feature type="helix" evidence="13">
    <location>
        <begin position="504"/>
        <end position="508"/>
    </location>
</feature>
<feature type="helix" evidence="13">
    <location>
        <begin position="514"/>
        <end position="531"/>
    </location>
</feature>
<feature type="turn" evidence="13">
    <location>
        <begin position="532"/>
        <end position="534"/>
    </location>
</feature>
<feature type="helix" evidence="13">
    <location>
        <begin position="539"/>
        <end position="541"/>
    </location>
</feature>
<feature type="helix" evidence="13">
    <location>
        <begin position="548"/>
        <end position="558"/>
    </location>
</feature>
<feature type="turn" evidence="13">
    <location>
        <begin position="559"/>
        <end position="562"/>
    </location>
</feature>
<feature type="helix" evidence="13">
    <location>
        <begin position="566"/>
        <end position="573"/>
    </location>
</feature>
<feature type="helix" evidence="13">
    <location>
        <begin position="582"/>
        <end position="598"/>
    </location>
</feature>
<organism>
    <name type="scientific">Rattus norvegicus</name>
    <name type="common">Rat</name>
    <dbReference type="NCBI Taxonomy" id="10116"/>
    <lineage>
        <taxon>Eukaryota</taxon>
        <taxon>Metazoa</taxon>
        <taxon>Chordata</taxon>
        <taxon>Craniata</taxon>
        <taxon>Vertebrata</taxon>
        <taxon>Euteleostomi</taxon>
        <taxon>Mammalia</taxon>
        <taxon>Eutheria</taxon>
        <taxon>Euarchontoglires</taxon>
        <taxon>Glires</taxon>
        <taxon>Rodentia</taxon>
        <taxon>Myomorpha</taxon>
        <taxon>Muroidea</taxon>
        <taxon>Muridae</taxon>
        <taxon>Murinae</taxon>
        <taxon>Rattus</taxon>
    </lineage>
</organism>
<accession>Q5EGZ1</accession>
<sequence>MSSSCWLLLSLVAVATAQSLIEEKAESFLNKFNQEAEDLSYQSSLASWNYNTNITEENAQKMNEAAAKWSAFYEEQSKIAQNFSLQEIQNATIKRQLKALQQSGSSALSPDKNKQLNTILNTMSTIYSTGKVCNSMNPQECFLLEPGLDEIMATSTDYNRRLWAWEGWRAEVGKQLRPLYEEYVVLKNEMARANNYEDYGDYWRGDYEAEGVEGYNYNRNQLIEDVENTFKEIKPLYEQLHAYVRTKLMEVYPSYISPTGCLPAHLLGDMWGRFWTNLYPLTTPFLQKPNIDVTDAMVNQSWDAERIFKEAEKFFVSVGLPQMTPGFWTNSMLTEPGDDRKVVCHPTAWDLGHGDFRIKMCTKVTMDNFLTAHHEMGHIQYDMAYAKQPFLLRNGANEGFHEAVGEIMSLSAATPKHLKSIGLLPSNFQEDNETEINFLLKQALTIVGTLPFTYMLEKWRWMVFQDKIPREQWTKKWWEMKREIVGVVEPLPHDETYCDPASLFHVSNDYSFIRYYTRTIYQFQFQEALCQAAKHDGPLHKCDISNSTEAGQKLLNMLSLGNSGPWTLALENVVGSRNMDVKPLLNYFQPLFVWLKEQNRNSTVGWSTDWSPYADQSIKVRISLKSALGKNAYEWTDNEMYLFRSSVAYAMREYFSREKNQTVPFGEADVWVSDLKPRVSFNFFVTSPKNVSDIIPRSEVEEAIRMSRGRINDIFGLNDNSLEFLGIYPTLKPPYEPPVTIWLIIFGVVMGTVVVGIVILIVTGIKGRKKKNETKREENPYDSMDIGKGESNAGFQNSDDAQTSF</sequence>
<proteinExistence type="evidence at protein level"/>
<evidence type="ECO:0000250" key="1"/>
<evidence type="ECO:0000250" key="2">
    <source>
        <dbReference type="UniProtKB" id="Q8R0I0"/>
    </source>
</evidence>
<evidence type="ECO:0000250" key="3">
    <source>
        <dbReference type="UniProtKB" id="Q9BYF1"/>
    </source>
</evidence>
<evidence type="ECO:0000255" key="4"/>
<evidence type="ECO:0000255" key="5">
    <source>
        <dbReference type="PROSITE-ProRule" id="PRU01354"/>
    </source>
</evidence>
<evidence type="ECO:0000255" key="6">
    <source>
        <dbReference type="PROSITE-ProRule" id="PRU01355"/>
    </source>
</evidence>
<evidence type="ECO:0000256" key="7">
    <source>
        <dbReference type="SAM" id="MobiDB-lite"/>
    </source>
</evidence>
<evidence type="ECO:0000269" key="8">
    <source>
    </source>
</evidence>
<evidence type="ECO:0000269" key="9">
    <source>
    </source>
</evidence>
<evidence type="ECO:0000269" key="10">
    <source>
    </source>
</evidence>
<evidence type="ECO:0000269" key="11">
    <source>
    </source>
</evidence>
<evidence type="ECO:0000305" key="12"/>
<evidence type="ECO:0007829" key="13">
    <source>
        <dbReference type="PDB" id="8GRY"/>
    </source>
</evidence>
<name>ACE2_RAT</name>
<reference key="1">
    <citation type="journal article" date="2004" name="J. Virol.">
        <title>Efficient replication of severe acute respiratory syndrome coronavirus in mouse cells is limited by murine angiotensin-converting enzyme 2.</title>
        <authorList>
            <person name="Li W."/>
            <person name="Greenough T.C."/>
            <person name="Moore M.J."/>
            <person name="Vasilieva N."/>
            <person name="Somasundaran M."/>
            <person name="Sullivan J.L."/>
            <person name="Farzan M."/>
            <person name="Choe H."/>
        </authorList>
    </citation>
    <scope>NUCLEOTIDE SEQUENCE [MRNA]</scope>
    <scope>LACK OF INTERACTION WITH SARS-COV SPIKE GLYCOPROTEIN</scope>
    <source>
        <strain>Sprague-Dawley</strain>
    </source>
</reference>
<reference key="2">
    <citation type="journal article" date="2002" name="Nature">
        <title>Angiotensin-converting enzyme 2 is an essential regulator of heart function.</title>
        <authorList>
            <person name="Crackower M.A."/>
            <person name="Sarao R."/>
            <person name="Oudit G.Y."/>
            <person name="Yagil C."/>
            <person name="Kozieradzki I."/>
            <person name="Scanga S.E."/>
            <person name="Oliveira-dos-Santos A.J."/>
            <person name="da Costa J."/>
            <person name="Zhang L."/>
            <person name="Pei Y."/>
            <person name="Scholey J."/>
            <person name="Ferrario C.M."/>
            <person name="Manoukian A.S."/>
            <person name="Chappell M.C."/>
            <person name="Backx P.H."/>
            <person name="Yagil Y."/>
            <person name="Penninger J.M."/>
        </authorList>
    </citation>
    <scope>FUNCTION</scope>
    <scope>INDUCTION</scope>
</reference>
<reference key="3">
    <citation type="journal article" date="2004" name="Endocrinology">
        <title>The novel angiotensin-converting enzyme (ACE) homolog, ACE2, is selectively expressed by adult Leydig cells of the testis.</title>
        <authorList>
            <person name="Douglas G.C."/>
            <person name="O'Bryan M.K."/>
            <person name="Hedger M.P."/>
            <person name="Lee D.K.L."/>
            <person name="Yarski M.A."/>
            <person name="Smith A.I."/>
            <person name="Lew R.A."/>
        </authorList>
    </citation>
    <scope>ACTIVITY REGULATION</scope>
    <scope>GLYCOSYLATION</scope>
    <scope>TISSUE SPECIFICITY</scope>
    <scope>SUBCELLULAR LOCATION</scope>
</reference>
<reference key="4">
    <citation type="journal article" date="2005" name="Eur. Heart J.">
        <title>Myocardial infarction increases ACE2 expression in rat and humans.</title>
        <authorList>
            <person name="Burrell L.M."/>
            <person name="Risvanis J."/>
            <person name="Kubota E."/>
            <person name="Dean R.G."/>
            <person name="MacDonald P.S."/>
            <person name="Lu S."/>
            <person name="Tikellis C."/>
            <person name="Grant S.L."/>
            <person name="Lew R.A."/>
            <person name="Smith A.I."/>
            <person name="Cooper M.E."/>
            <person name="Johnston C.I."/>
        </authorList>
    </citation>
    <scope>TISSUE SPECIFICITY</scope>
    <scope>INDUCTION</scope>
</reference>
<reference key="5">
    <citation type="journal article" date="2005" name="Peptides">
        <title>Organ-specific distribution of ACE2 mRNA and correlating peptidase activity in rodents.</title>
        <authorList>
            <person name="Gembardt F."/>
            <person name="Sterner-Kock A."/>
            <person name="Imboden H."/>
            <person name="Spalteholz M."/>
            <person name="Reibitz F."/>
            <person name="Schultheiss H.-P."/>
            <person name="Siems W.-E."/>
            <person name="Walther T."/>
        </authorList>
    </citation>
    <scope>TISSUE SPECIFICITY</scope>
</reference>
<gene>
    <name type="primary">Ace2</name>
</gene>
<dbReference type="EC" id="3.4.17.23" evidence="3"/>
<dbReference type="EC" id="3.4.17.-" evidence="3"/>
<dbReference type="EMBL" id="AY881244">
    <property type="protein sequence ID" value="AAW78017.1"/>
    <property type="molecule type" value="mRNA"/>
</dbReference>
<dbReference type="RefSeq" id="NP_001012006.1">
    <property type="nucleotide sequence ID" value="NM_001012006.2"/>
</dbReference>
<dbReference type="RefSeq" id="XP_038955582.1">
    <property type="nucleotide sequence ID" value="XM_039099654.2"/>
</dbReference>
<dbReference type="RefSeq" id="XP_038955583.1">
    <property type="nucleotide sequence ID" value="XM_039099655.2"/>
</dbReference>
<dbReference type="PDB" id="8GRY">
    <property type="method" value="EM"/>
    <property type="resolution" value="3.29 A"/>
    <property type="chains" value="A=19-615"/>
</dbReference>
<dbReference type="PDBsum" id="8GRY"/>
<dbReference type="EMDB" id="EMD-34217"/>
<dbReference type="SMR" id="Q5EGZ1"/>
<dbReference type="BioGRID" id="257260">
    <property type="interactions" value="1"/>
</dbReference>
<dbReference type="FunCoup" id="Q5EGZ1">
    <property type="interactions" value="215"/>
</dbReference>
<dbReference type="IntAct" id="Q5EGZ1">
    <property type="interactions" value="4"/>
</dbReference>
<dbReference type="STRING" id="10116.ENSRNOP00000047913"/>
<dbReference type="BindingDB" id="Q5EGZ1"/>
<dbReference type="ChEMBL" id="CHEMBL2311"/>
<dbReference type="DrugCentral" id="Q5EGZ1"/>
<dbReference type="MEROPS" id="M02.006"/>
<dbReference type="GlyCosmos" id="Q5EGZ1">
    <property type="glycosylation" value="9 sites, No reported glycans"/>
</dbReference>
<dbReference type="GlyGen" id="Q5EGZ1">
    <property type="glycosylation" value="9 sites"/>
</dbReference>
<dbReference type="PhosphoSitePlus" id="Q5EGZ1"/>
<dbReference type="SwissPalm" id="Q5EGZ1"/>
<dbReference type="PaxDb" id="10116-ENSRNOP00000047913"/>
<dbReference type="Ensembl" id="ENSRNOT00000080730.2">
    <property type="protein sequence ID" value="ENSRNOP00000070410.2"/>
    <property type="gene ID" value="ENSRNOG00000031665.6"/>
</dbReference>
<dbReference type="GeneID" id="302668"/>
<dbReference type="KEGG" id="rno:302668"/>
<dbReference type="UCSC" id="RGD:728890">
    <property type="organism name" value="rat"/>
</dbReference>
<dbReference type="AGR" id="RGD:728890"/>
<dbReference type="CTD" id="59272"/>
<dbReference type="RGD" id="728890">
    <property type="gene designation" value="Ace2"/>
</dbReference>
<dbReference type="eggNOG" id="KOG3690">
    <property type="taxonomic scope" value="Eukaryota"/>
</dbReference>
<dbReference type="GeneTree" id="ENSGT00940000158077"/>
<dbReference type="InParanoid" id="Q5EGZ1"/>
<dbReference type="OMA" id="FTVIHHE"/>
<dbReference type="PhylomeDB" id="Q5EGZ1"/>
<dbReference type="BRENDA" id="3.4.17.23">
    <property type="organism ID" value="5301"/>
</dbReference>
<dbReference type="Reactome" id="R-RNO-2022377">
    <property type="pathway name" value="Metabolism of Angiotensinogen to Angiotensins"/>
</dbReference>
<dbReference type="PRO" id="PR:Q5EGZ1"/>
<dbReference type="Proteomes" id="UP000002494">
    <property type="component" value="Chromosome X"/>
</dbReference>
<dbReference type="GO" id="GO:0016324">
    <property type="term" value="C:apical plasma membrane"/>
    <property type="evidence" value="ECO:0000266"/>
    <property type="project" value="RGD"/>
</dbReference>
<dbReference type="GO" id="GO:0031526">
    <property type="term" value="C:brush border membrane"/>
    <property type="evidence" value="ECO:0000266"/>
    <property type="project" value="RGD"/>
</dbReference>
<dbReference type="GO" id="GO:0009986">
    <property type="term" value="C:cell surface"/>
    <property type="evidence" value="ECO:0000250"/>
    <property type="project" value="UniProtKB"/>
</dbReference>
<dbReference type="GO" id="GO:0005929">
    <property type="term" value="C:cilium"/>
    <property type="evidence" value="ECO:0007669"/>
    <property type="project" value="UniProtKB-SubCell"/>
</dbReference>
<dbReference type="GO" id="GO:0005737">
    <property type="term" value="C:cytoplasm"/>
    <property type="evidence" value="ECO:0000266"/>
    <property type="project" value="RGD"/>
</dbReference>
<dbReference type="GO" id="GO:0005576">
    <property type="term" value="C:extracellular region"/>
    <property type="evidence" value="ECO:0000266"/>
    <property type="project" value="RGD"/>
</dbReference>
<dbReference type="GO" id="GO:0005615">
    <property type="term" value="C:extracellular space"/>
    <property type="evidence" value="ECO:0000314"/>
    <property type="project" value="RGD"/>
</dbReference>
<dbReference type="GO" id="GO:0005886">
    <property type="term" value="C:plasma membrane"/>
    <property type="evidence" value="ECO:0000250"/>
    <property type="project" value="UniProtKB"/>
</dbReference>
<dbReference type="GO" id="GO:0004180">
    <property type="term" value="F:carboxypeptidase activity"/>
    <property type="evidence" value="ECO:0000314"/>
    <property type="project" value="CACAO"/>
</dbReference>
<dbReference type="GO" id="GO:0004175">
    <property type="term" value="F:endopeptidase activity"/>
    <property type="evidence" value="ECO:0000266"/>
    <property type="project" value="RGD"/>
</dbReference>
<dbReference type="GO" id="GO:0042802">
    <property type="term" value="F:identical protein binding"/>
    <property type="evidence" value="ECO:0000266"/>
    <property type="project" value="RGD"/>
</dbReference>
<dbReference type="GO" id="GO:0046872">
    <property type="term" value="F:metal ion binding"/>
    <property type="evidence" value="ECO:0007669"/>
    <property type="project" value="UniProtKB-KW"/>
</dbReference>
<dbReference type="GO" id="GO:0004181">
    <property type="term" value="F:metallocarboxypeptidase activity"/>
    <property type="evidence" value="ECO:0000266"/>
    <property type="project" value="RGD"/>
</dbReference>
<dbReference type="GO" id="GO:0008237">
    <property type="term" value="F:metallopeptidase activity"/>
    <property type="evidence" value="ECO:0000266"/>
    <property type="project" value="RGD"/>
</dbReference>
<dbReference type="GO" id="GO:0008241">
    <property type="term" value="F:peptidyl-dipeptidase activity"/>
    <property type="evidence" value="ECO:0000266"/>
    <property type="project" value="RGD"/>
</dbReference>
<dbReference type="GO" id="GO:0141109">
    <property type="term" value="F:transporter activator activity"/>
    <property type="evidence" value="ECO:0007669"/>
    <property type="project" value="Ensembl"/>
</dbReference>
<dbReference type="GO" id="GO:0001618">
    <property type="term" value="F:virus receptor activity"/>
    <property type="evidence" value="ECO:0000250"/>
    <property type="project" value="UniProtKB"/>
</dbReference>
<dbReference type="GO" id="GO:0002003">
    <property type="term" value="P:angiotensin maturation"/>
    <property type="evidence" value="ECO:0000266"/>
    <property type="project" value="RGD"/>
</dbReference>
<dbReference type="GO" id="GO:0003051">
    <property type="term" value="P:angiotensin-mediated drinking behavior"/>
    <property type="evidence" value="ECO:0000266"/>
    <property type="project" value="RGD"/>
</dbReference>
<dbReference type="GO" id="GO:0098670">
    <property type="term" value="P:entry receptor-mediated virion attachment to host cell"/>
    <property type="evidence" value="ECO:0000266"/>
    <property type="project" value="RGD"/>
</dbReference>
<dbReference type="GO" id="GO:0060135">
    <property type="term" value="P:maternal process involved in female pregnancy"/>
    <property type="evidence" value="ECO:0000270"/>
    <property type="project" value="RGD"/>
</dbReference>
<dbReference type="GO" id="GO:0070373">
    <property type="term" value="P:negative regulation of ERK1 and ERK2 cascade"/>
    <property type="evidence" value="ECO:0000315"/>
    <property type="project" value="RGD"/>
</dbReference>
<dbReference type="GO" id="GO:0048662">
    <property type="term" value="P:negative regulation of smooth muscle cell proliferation"/>
    <property type="evidence" value="ECO:0000315"/>
    <property type="project" value="RGD"/>
</dbReference>
<dbReference type="GO" id="GO:0051957">
    <property type="term" value="P:positive regulation of amino acid transport"/>
    <property type="evidence" value="ECO:0000266"/>
    <property type="project" value="RGD"/>
</dbReference>
<dbReference type="GO" id="GO:0060452">
    <property type="term" value="P:positive regulation of cardiac muscle contraction"/>
    <property type="evidence" value="ECO:0000266"/>
    <property type="project" value="RGD"/>
</dbReference>
<dbReference type="GO" id="GO:1903598">
    <property type="term" value="P:positive regulation of gap junction assembly"/>
    <property type="evidence" value="ECO:0000266"/>
    <property type="project" value="RGD"/>
</dbReference>
<dbReference type="GO" id="GO:1905737">
    <property type="term" value="P:positive regulation of L-proline import across plasma membrane"/>
    <property type="evidence" value="ECO:0000266"/>
    <property type="project" value="RGD"/>
</dbReference>
<dbReference type="GO" id="GO:0046813">
    <property type="term" value="P:receptor-mediated virion attachment to host cell"/>
    <property type="evidence" value="ECO:0000266"/>
    <property type="project" value="RGD"/>
</dbReference>
<dbReference type="GO" id="GO:1903779">
    <property type="term" value="P:regulation of cardiac conduction"/>
    <property type="evidence" value="ECO:0000266"/>
    <property type="project" value="RGD"/>
</dbReference>
<dbReference type="GO" id="GO:0003081">
    <property type="term" value="P:regulation of systemic arterial blood pressure by renin-angiotensin"/>
    <property type="evidence" value="ECO:0000266"/>
    <property type="project" value="RGD"/>
</dbReference>
<dbReference type="GO" id="GO:0046718">
    <property type="term" value="P:symbiont entry into host cell"/>
    <property type="evidence" value="ECO:0000266"/>
    <property type="project" value="RGD"/>
</dbReference>
<dbReference type="GO" id="GO:0015827">
    <property type="term" value="P:tryptophan transport"/>
    <property type="evidence" value="ECO:0000266"/>
    <property type="project" value="RGD"/>
</dbReference>
<dbReference type="CDD" id="cd06461">
    <property type="entry name" value="M2_ACE"/>
    <property type="match status" value="1"/>
</dbReference>
<dbReference type="FunFam" id="1.10.1370.30:FF:000001">
    <property type="entry name" value="Angiotensin-converting enzyme"/>
    <property type="match status" value="1"/>
</dbReference>
<dbReference type="Gene3D" id="1.10.1370.30">
    <property type="match status" value="1"/>
</dbReference>
<dbReference type="InterPro" id="IPR031588">
    <property type="entry name" value="Collectrin_dom"/>
</dbReference>
<dbReference type="InterPro" id="IPR001548">
    <property type="entry name" value="Peptidase_M2"/>
</dbReference>
<dbReference type="PANTHER" id="PTHR10514">
    <property type="entry name" value="ANGIOTENSIN-CONVERTING ENZYME"/>
    <property type="match status" value="1"/>
</dbReference>
<dbReference type="PANTHER" id="PTHR10514:SF24">
    <property type="entry name" value="ANGIOTENSIN-CONVERTING ENZYME 2"/>
    <property type="match status" value="1"/>
</dbReference>
<dbReference type="Pfam" id="PF16959">
    <property type="entry name" value="Collectrin"/>
    <property type="match status" value="1"/>
</dbReference>
<dbReference type="Pfam" id="PF01401">
    <property type="entry name" value="Peptidase_M2"/>
    <property type="match status" value="1"/>
</dbReference>
<dbReference type="PRINTS" id="PR00791">
    <property type="entry name" value="PEPDIPTASEA"/>
</dbReference>
<dbReference type="SUPFAM" id="SSF55486">
    <property type="entry name" value="Metalloproteases ('zincins'), catalytic domain"/>
    <property type="match status" value="1"/>
</dbReference>
<dbReference type="PROSITE" id="PS52010">
    <property type="entry name" value="COLLECTRIN_LIKE"/>
    <property type="match status" value="1"/>
</dbReference>
<dbReference type="PROSITE" id="PS52011">
    <property type="entry name" value="PEPTIDASE_M2"/>
    <property type="match status" value="1"/>
</dbReference>
<dbReference type="PROSITE" id="PS00678">
    <property type="entry name" value="WD_REPEATS_1"/>
    <property type="match status" value="1"/>
</dbReference>
<dbReference type="PROSITE" id="PS00142">
    <property type="entry name" value="ZINC_PROTEASE"/>
    <property type="match status" value="1"/>
</dbReference>